<protein>
    <recommendedName>
        <fullName evidence="1">ATP phosphoribosyltransferase</fullName>
        <shortName evidence="1">ATP-PRT</shortName>
        <shortName evidence="1">ATP-PRTase</shortName>
        <ecNumber evidence="1">2.4.2.17</ecNumber>
    </recommendedName>
</protein>
<name>HIS1_STAS1</name>
<keyword id="KW-0028">Amino-acid biosynthesis</keyword>
<keyword id="KW-0067">ATP-binding</keyword>
<keyword id="KW-0963">Cytoplasm</keyword>
<keyword id="KW-0328">Glycosyltransferase</keyword>
<keyword id="KW-0368">Histidine biosynthesis</keyword>
<keyword id="KW-0547">Nucleotide-binding</keyword>
<keyword id="KW-1185">Reference proteome</keyword>
<keyword id="KW-0808">Transferase</keyword>
<dbReference type="EC" id="2.4.2.17" evidence="1"/>
<dbReference type="EMBL" id="AP008934">
    <property type="protein sequence ID" value="BAE17575.1"/>
    <property type="molecule type" value="Genomic_DNA"/>
</dbReference>
<dbReference type="RefSeq" id="WP_002482389.1">
    <property type="nucleotide sequence ID" value="NZ_MTGA01000036.1"/>
</dbReference>
<dbReference type="SMR" id="Q4A043"/>
<dbReference type="GeneID" id="66866588"/>
<dbReference type="KEGG" id="ssp:SSP0430"/>
<dbReference type="eggNOG" id="COG0040">
    <property type="taxonomic scope" value="Bacteria"/>
</dbReference>
<dbReference type="HOGENOM" id="CLU_038115_2_0_9"/>
<dbReference type="OrthoDB" id="9801867at2"/>
<dbReference type="UniPathway" id="UPA00031">
    <property type="reaction ID" value="UER00006"/>
</dbReference>
<dbReference type="Proteomes" id="UP000006371">
    <property type="component" value="Chromosome"/>
</dbReference>
<dbReference type="GO" id="GO:0005737">
    <property type="term" value="C:cytoplasm"/>
    <property type="evidence" value="ECO:0007669"/>
    <property type="project" value="UniProtKB-SubCell"/>
</dbReference>
<dbReference type="GO" id="GO:0005524">
    <property type="term" value="F:ATP binding"/>
    <property type="evidence" value="ECO:0007669"/>
    <property type="project" value="UniProtKB-KW"/>
</dbReference>
<dbReference type="GO" id="GO:0003879">
    <property type="term" value="F:ATP phosphoribosyltransferase activity"/>
    <property type="evidence" value="ECO:0007669"/>
    <property type="project" value="UniProtKB-UniRule"/>
</dbReference>
<dbReference type="GO" id="GO:0000105">
    <property type="term" value="P:L-histidine biosynthetic process"/>
    <property type="evidence" value="ECO:0007669"/>
    <property type="project" value="UniProtKB-UniRule"/>
</dbReference>
<dbReference type="CDD" id="cd13595">
    <property type="entry name" value="PBP2_HisGs"/>
    <property type="match status" value="1"/>
</dbReference>
<dbReference type="FunFam" id="3.40.190.10:FF:000008">
    <property type="entry name" value="ATP phosphoribosyltransferase"/>
    <property type="match status" value="1"/>
</dbReference>
<dbReference type="Gene3D" id="3.40.190.10">
    <property type="entry name" value="Periplasmic binding protein-like II"/>
    <property type="match status" value="2"/>
</dbReference>
<dbReference type="HAMAP" id="MF_01018">
    <property type="entry name" value="HisG_Short"/>
    <property type="match status" value="1"/>
</dbReference>
<dbReference type="InterPro" id="IPR013820">
    <property type="entry name" value="ATP_PRibTrfase_cat"/>
</dbReference>
<dbReference type="InterPro" id="IPR001348">
    <property type="entry name" value="ATP_PRibTrfase_HisG"/>
</dbReference>
<dbReference type="InterPro" id="IPR024893">
    <property type="entry name" value="ATP_PRibTrfase_HisG_short"/>
</dbReference>
<dbReference type="NCBIfam" id="TIGR00070">
    <property type="entry name" value="hisG"/>
    <property type="match status" value="1"/>
</dbReference>
<dbReference type="PANTHER" id="PTHR21403:SF8">
    <property type="entry name" value="ATP PHOSPHORIBOSYLTRANSFERASE"/>
    <property type="match status" value="1"/>
</dbReference>
<dbReference type="PANTHER" id="PTHR21403">
    <property type="entry name" value="ATP PHOSPHORIBOSYLTRANSFERASE ATP-PRTASE"/>
    <property type="match status" value="1"/>
</dbReference>
<dbReference type="Pfam" id="PF01634">
    <property type="entry name" value="HisG"/>
    <property type="match status" value="1"/>
</dbReference>
<dbReference type="SUPFAM" id="SSF53850">
    <property type="entry name" value="Periplasmic binding protein-like II"/>
    <property type="match status" value="1"/>
</dbReference>
<organism>
    <name type="scientific">Staphylococcus saprophyticus subsp. saprophyticus (strain ATCC 15305 / DSM 20229 / NCIMB 8711 / NCTC 7292 / S-41)</name>
    <dbReference type="NCBI Taxonomy" id="342451"/>
    <lineage>
        <taxon>Bacteria</taxon>
        <taxon>Bacillati</taxon>
        <taxon>Bacillota</taxon>
        <taxon>Bacilli</taxon>
        <taxon>Bacillales</taxon>
        <taxon>Staphylococcaceae</taxon>
        <taxon>Staphylococcus</taxon>
    </lineage>
</organism>
<reference key="1">
    <citation type="journal article" date="2005" name="Proc. Natl. Acad. Sci. U.S.A.">
        <title>Whole genome sequence of Staphylococcus saprophyticus reveals the pathogenesis of uncomplicated urinary tract infection.</title>
        <authorList>
            <person name="Kuroda M."/>
            <person name="Yamashita A."/>
            <person name="Hirakawa H."/>
            <person name="Kumano M."/>
            <person name="Morikawa K."/>
            <person name="Higashide M."/>
            <person name="Maruyama A."/>
            <person name="Inose Y."/>
            <person name="Matoba K."/>
            <person name="Toh H."/>
            <person name="Kuhara S."/>
            <person name="Hattori M."/>
            <person name="Ohta T."/>
        </authorList>
    </citation>
    <scope>NUCLEOTIDE SEQUENCE [LARGE SCALE GENOMIC DNA]</scope>
    <source>
        <strain>ATCC 15305 / DSM 20229 / NCIMB 8711 / NCTC 7292 / S-41</strain>
    </source>
</reference>
<accession>Q4A043</accession>
<gene>
    <name evidence="1" type="primary">hisG</name>
    <name type="ordered locus">SSP0430</name>
</gene>
<sequence length="205" mass="22396">MLTVAIAKGRLLKSFITYLKQANEQELVDALEKRERQLLISVGSIQIVLVKGSDVPIYVEQGVADVGIVGSDILEEGNYTINNLVDLPFGDCHFALAAKPETSSFNKIATSYVKTARAYFEAQGIDVELVKLSGSIELACLVEMVDGIVDIVQTGTTLKSNGLVEKDTIKPINAKLITNKQSYFKKSSEIDAFLSTLEVSLIDHR</sequence>
<comment type="function">
    <text evidence="1">Catalyzes the condensation of ATP and 5-phosphoribose 1-diphosphate to form N'-(5'-phosphoribosyl)-ATP (PR-ATP). Has a crucial role in the pathway because the rate of histidine biosynthesis seems to be controlled primarily by regulation of HisG enzymatic activity.</text>
</comment>
<comment type="catalytic activity">
    <reaction evidence="1">
        <text>1-(5-phospho-beta-D-ribosyl)-ATP + diphosphate = 5-phospho-alpha-D-ribose 1-diphosphate + ATP</text>
        <dbReference type="Rhea" id="RHEA:18473"/>
        <dbReference type="ChEBI" id="CHEBI:30616"/>
        <dbReference type="ChEBI" id="CHEBI:33019"/>
        <dbReference type="ChEBI" id="CHEBI:58017"/>
        <dbReference type="ChEBI" id="CHEBI:73183"/>
        <dbReference type="EC" id="2.4.2.17"/>
    </reaction>
</comment>
<comment type="pathway">
    <text evidence="1">Amino-acid biosynthesis; L-histidine biosynthesis; L-histidine from 5-phospho-alpha-D-ribose 1-diphosphate: step 1/9.</text>
</comment>
<comment type="subunit">
    <text evidence="1">Heteromultimer composed of HisG and HisZ subunits.</text>
</comment>
<comment type="subcellular location">
    <subcellularLocation>
        <location evidence="1">Cytoplasm</location>
    </subcellularLocation>
</comment>
<comment type="domain">
    <text>Lacks the C-terminal regulatory region which is replaced by HisZ.</text>
</comment>
<comment type="similarity">
    <text evidence="1">Belongs to the ATP phosphoribosyltransferase family. Short subfamily.</text>
</comment>
<proteinExistence type="inferred from homology"/>
<evidence type="ECO:0000255" key="1">
    <source>
        <dbReference type="HAMAP-Rule" id="MF_01018"/>
    </source>
</evidence>
<feature type="chain" id="PRO_0000151939" description="ATP phosphoribosyltransferase">
    <location>
        <begin position="1"/>
        <end position="205"/>
    </location>
</feature>